<proteinExistence type="inferred from homology"/>
<keyword id="KW-0963">Cytoplasm</keyword>
<keyword id="KW-0378">Hydrolase</keyword>
<keyword id="KW-0540">Nuclease</keyword>
<keyword id="KW-1185">Reference proteome</keyword>
<keyword id="KW-0690">Ribosome biogenesis</keyword>
<name>YQGF_RHIME</name>
<comment type="function">
    <text evidence="1">Could be a nuclease involved in processing of the 5'-end of pre-16S rRNA.</text>
</comment>
<comment type="subcellular location">
    <subcellularLocation>
        <location evidence="1">Cytoplasm</location>
    </subcellularLocation>
</comment>
<comment type="similarity">
    <text evidence="1">Belongs to the YqgF nuclease family.</text>
</comment>
<feature type="chain" id="PRO_0000172124" description="Putative pre-16S rRNA nuclease">
    <location>
        <begin position="1"/>
        <end position="165"/>
    </location>
</feature>
<sequence>MAILTMEELAERLPPYQSVAGLDLGTKTIGISVSDLGRRFATPREVIRRVKFGADAQALLSFAEKEKIAAFIIGLPVNMDGSEGPRCQATRAFVRNMGEKTDIPFVLWDERLSTVAAERVLIEMDVSRKKRAERIDSAAASFILQGALDRLASLARGASGDRDAP</sequence>
<protein>
    <recommendedName>
        <fullName evidence="1">Putative pre-16S rRNA nuclease</fullName>
        <ecNumber evidence="1">3.1.-.-</ecNumber>
    </recommendedName>
</protein>
<gene>
    <name type="ordered locus">R01309</name>
    <name type="ORF">SMc01355</name>
</gene>
<accession>Q92QL0</accession>
<dbReference type="EC" id="3.1.-.-" evidence="1"/>
<dbReference type="EMBL" id="AL591688">
    <property type="protein sequence ID" value="CAC45888.1"/>
    <property type="molecule type" value="Genomic_DNA"/>
</dbReference>
<dbReference type="RefSeq" id="NP_385415.1">
    <property type="nucleotide sequence ID" value="NC_003047.1"/>
</dbReference>
<dbReference type="SMR" id="Q92QL0"/>
<dbReference type="EnsemblBacteria" id="CAC45888">
    <property type="protein sequence ID" value="CAC45888"/>
    <property type="gene ID" value="SMc01355"/>
</dbReference>
<dbReference type="KEGG" id="sme:SMc01355"/>
<dbReference type="PATRIC" id="fig|266834.11.peg.2723"/>
<dbReference type="eggNOG" id="COG0816">
    <property type="taxonomic scope" value="Bacteria"/>
</dbReference>
<dbReference type="HOGENOM" id="CLU_098240_1_1_5"/>
<dbReference type="OrthoDB" id="9796140at2"/>
<dbReference type="Proteomes" id="UP000001976">
    <property type="component" value="Chromosome"/>
</dbReference>
<dbReference type="GO" id="GO:0005829">
    <property type="term" value="C:cytosol"/>
    <property type="evidence" value="ECO:0007669"/>
    <property type="project" value="TreeGrafter"/>
</dbReference>
<dbReference type="GO" id="GO:0004518">
    <property type="term" value="F:nuclease activity"/>
    <property type="evidence" value="ECO:0007669"/>
    <property type="project" value="UniProtKB-KW"/>
</dbReference>
<dbReference type="GO" id="GO:0000967">
    <property type="term" value="P:rRNA 5'-end processing"/>
    <property type="evidence" value="ECO:0007669"/>
    <property type="project" value="UniProtKB-UniRule"/>
</dbReference>
<dbReference type="CDD" id="cd16964">
    <property type="entry name" value="YqgF"/>
    <property type="match status" value="1"/>
</dbReference>
<dbReference type="Gene3D" id="3.30.420.140">
    <property type="entry name" value="YqgF/RNase H-like domain"/>
    <property type="match status" value="1"/>
</dbReference>
<dbReference type="HAMAP" id="MF_00651">
    <property type="entry name" value="Nuclease_YqgF"/>
    <property type="match status" value="1"/>
</dbReference>
<dbReference type="InterPro" id="IPR012337">
    <property type="entry name" value="RNaseH-like_sf"/>
</dbReference>
<dbReference type="InterPro" id="IPR005227">
    <property type="entry name" value="YqgF"/>
</dbReference>
<dbReference type="InterPro" id="IPR006641">
    <property type="entry name" value="YqgF/RNaseH-like_dom"/>
</dbReference>
<dbReference type="InterPro" id="IPR037027">
    <property type="entry name" value="YqgF/RNaseH-like_dom_sf"/>
</dbReference>
<dbReference type="NCBIfam" id="TIGR00250">
    <property type="entry name" value="RNAse_H_YqgF"/>
    <property type="match status" value="1"/>
</dbReference>
<dbReference type="PANTHER" id="PTHR33317">
    <property type="entry name" value="POLYNUCLEOTIDYL TRANSFERASE, RIBONUCLEASE H-LIKE SUPERFAMILY PROTEIN"/>
    <property type="match status" value="1"/>
</dbReference>
<dbReference type="PANTHER" id="PTHR33317:SF4">
    <property type="entry name" value="POLYNUCLEOTIDYL TRANSFERASE, RIBONUCLEASE H-LIKE SUPERFAMILY PROTEIN"/>
    <property type="match status" value="1"/>
</dbReference>
<dbReference type="Pfam" id="PF03652">
    <property type="entry name" value="RuvX"/>
    <property type="match status" value="1"/>
</dbReference>
<dbReference type="SMART" id="SM00732">
    <property type="entry name" value="YqgFc"/>
    <property type="match status" value="1"/>
</dbReference>
<dbReference type="SUPFAM" id="SSF53098">
    <property type="entry name" value="Ribonuclease H-like"/>
    <property type="match status" value="1"/>
</dbReference>
<evidence type="ECO:0000255" key="1">
    <source>
        <dbReference type="HAMAP-Rule" id="MF_00651"/>
    </source>
</evidence>
<reference key="1">
    <citation type="journal article" date="2001" name="Proc. Natl. Acad. Sci. U.S.A.">
        <title>Analysis of the chromosome sequence of the legume symbiont Sinorhizobium meliloti strain 1021.</title>
        <authorList>
            <person name="Capela D."/>
            <person name="Barloy-Hubler F."/>
            <person name="Gouzy J."/>
            <person name="Bothe G."/>
            <person name="Ampe F."/>
            <person name="Batut J."/>
            <person name="Boistard P."/>
            <person name="Becker A."/>
            <person name="Boutry M."/>
            <person name="Cadieu E."/>
            <person name="Dreano S."/>
            <person name="Gloux S."/>
            <person name="Godrie T."/>
            <person name="Goffeau A."/>
            <person name="Kahn D."/>
            <person name="Kiss E."/>
            <person name="Lelaure V."/>
            <person name="Masuy D."/>
            <person name="Pohl T."/>
            <person name="Portetelle D."/>
            <person name="Puehler A."/>
            <person name="Purnelle B."/>
            <person name="Ramsperger U."/>
            <person name="Renard C."/>
            <person name="Thebault P."/>
            <person name="Vandenbol M."/>
            <person name="Weidner S."/>
            <person name="Galibert F."/>
        </authorList>
    </citation>
    <scope>NUCLEOTIDE SEQUENCE [LARGE SCALE GENOMIC DNA]</scope>
    <source>
        <strain>1021</strain>
    </source>
</reference>
<reference key="2">
    <citation type="journal article" date="2001" name="Science">
        <title>The composite genome of the legume symbiont Sinorhizobium meliloti.</title>
        <authorList>
            <person name="Galibert F."/>
            <person name="Finan T.M."/>
            <person name="Long S.R."/>
            <person name="Puehler A."/>
            <person name="Abola P."/>
            <person name="Ampe F."/>
            <person name="Barloy-Hubler F."/>
            <person name="Barnett M.J."/>
            <person name="Becker A."/>
            <person name="Boistard P."/>
            <person name="Bothe G."/>
            <person name="Boutry M."/>
            <person name="Bowser L."/>
            <person name="Buhrmester J."/>
            <person name="Cadieu E."/>
            <person name="Capela D."/>
            <person name="Chain P."/>
            <person name="Cowie A."/>
            <person name="Davis R.W."/>
            <person name="Dreano S."/>
            <person name="Federspiel N.A."/>
            <person name="Fisher R.F."/>
            <person name="Gloux S."/>
            <person name="Godrie T."/>
            <person name="Goffeau A."/>
            <person name="Golding B."/>
            <person name="Gouzy J."/>
            <person name="Gurjal M."/>
            <person name="Hernandez-Lucas I."/>
            <person name="Hong A."/>
            <person name="Huizar L."/>
            <person name="Hyman R.W."/>
            <person name="Jones T."/>
            <person name="Kahn D."/>
            <person name="Kahn M.L."/>
            <person name="Kalman S."/>
            <person name="Keating D.H."/>
            <person name="Kiss E."/>
            <person name="Komp C."/>
            <person name="Lelaure V."/>
            <person name="Masuy D."/>
            <person name="Palm C."/>
            <person name="Peck M.C."/>
            <person name="Pohl T.M."/>
            <person name="Portetelle D."/>
            <person name="Purnelle B."/>
            <person name="Ramsperger U."/>
            <person name="Surzycki R."/>
            <person name="Thebault P."/>
            <person name="Vandenbol M."/>
            <person name="Vorhoelter F.J."/>
            <person name="Weidner S."/>
            <person name="Wells D.H."/>
            <person name="Wong K."/>
            <person name="Yeh K.-C."/>
            <person name="Batut J."/>
        </authorList>
    </citation>
    <scope>NUCLEOTIDE SEQUENCE [LARGE SCALE GENOMIC DNA]</scope>
    <source>
        <strain>1021</strain>
    </source>
</reference>
<organism>
    <name type="scientific">Rhizobium meliloti (strain 1021)</name>
    <name type="common">Ensifer meliloti</name>
    <name type="synonym">Sinorhizobium meliloti</name>
    <dbReference type="NCBI Taxonomy" id="266834"/>
    <lineage>
        <taxon>Bacteria</taxon>
        <taxon>Pseudomonadati</taxon>
        <taxon>Pseudomonadota</taxon>
        <taxon>Alphaproteobacteria</taxon>
        <taxon>Hyphomicrobiales</taxon>
        <taxon>Rhizobiaceae</taxon>
        <taxon>Sinorhizobium/Ensifer group</taxon>
        <taxon>Sinorhizobium</taxon>
    </lineage>
</organism>